<dbReference type="EMBL" id="CP001638">
    <property type="protein sequence ID" value="ACS23660.1"/>
    <property type="molecule type" value="Genomic_DNA"/>
</dbReference>
<dbReference type="STRING" id="471223.GWCH70_0774"/>
<dbReference type="KEGG" id="gwc:GWCH70_0774"/>
<dbReference type="eggNOG" id="ENOG5032YMN">
    <property type="taxonomic scope" value="Bacteria"/>
</dbReference>
<dbReference type="HOGENOM" id="CLU_142282_0_0_9"/>
<dbReference type="OrthoDB" id="2966478at2"/>
<dbReference type="HAMAP" id="MF_01861">
    <property type="entry name" value="UPF0738"/>
    <property type="match status" value="1"/>
</dbReference>
<dbReference type="InterPro" id="IPR020908">
    <property type="entry name" value="UPF0738"/>
</dbReference>
<dbReference type="Pfam" id="PF19785">
    <property type="entry name" value="UPF0738"/>
    <property type="match status" value="1"/>
</dbReference>
<reference key="1">
    <citation type="submission" date="2009-06" db="EMBL/GenBank/DDBJ databases">
        <title>Complete sequence of chromosome of Geopacillus sp. WCH70.</title>
        <authorList>
            <consortium name="US DOE Joint Genome Institute"/>
            <person name="Lucas S."/>
            <person name="Copeland A."/>
            <person name="Lapidus A."/>
            <person name="Glavina del Rio T."/>
            <person name="Dalin E."/>
            <person name="Tice H."/>
            <person name="Bruce D."/>
            <person name="Goodwin L."/>
            <person name="Pitluck S."/>
            <person name="Chertkov O."/>
            <person name="Brettin T."/>
            <person name="Detter J.C."/>
            <person name="Han C."/>
            <person name="Larimer F."/>
            <person name="Land M."/>
            <person name="Hauser L."/>
            <person name="Kyrpides N."/>
            <person name="Mikhailova N."/>
            <person name="Brumm P."/>
            <person name="Mead D.A."/>
            <person name="Richardson P."/>
        </authorList>
    </citation>
    <scope>NUCLEOTIDE SEQUENCE [LARGE SCALE GENOMIC DNA]</scope>
    <source>
        <strain>WCH70</strain>
    </source>
</reference>
<organism>
    <name type="scientific">Geobacillus sp. (strain WCH70)</name>
    <dbReference type="NCBI Taxonomy" id="471223"/>
    <lineage>
        <taxon>Bacteria</taxon>
        <taxon>Bacillati</taxon>
        <taxon>Bacillota</taxon>
        <taxon>Bacilli</taxon>
        <taxon>Bacillales</taxon>
        <taxon>Anoxybacillaceae</taxon>
        <taxon>Geobacillus</taxon>
    </lineage>
</organism>
<feature type="chain" id="PRO_1000216157" description="UPF0738 protein GWCH70_0774">
    <location>
        <begin position="1"/>
        <end position="124"/>
    </location>
</feature>
<proteinExistence type="inferred from homology"/>
<protein>
    <recommendedName>
        <fullName evidence="1">UPF0738 protein GWCH70_0774</fullName>
    </recommendedName>
</protein>
<gene>
    <name type="ordered locus">GWCH70_0774</name>
</gene>
<comment type="similarity">
    <text evidence="1">Belongs to the UPF0738 family.</text>
</comment>
<evidence type="ECO:0000255" key="1">
    <source>
        <dbReference type="HAMAP-Rule" id="MF_01861"/>
    </source>
</evidence>
<accession>C5D7A2</accession>
<name>Y774_GEOSW</name>
<sequence>MQKKLVVEKVEKRDERLWLICDHPPFSLEQARPKNHMLVDSDNIAFIYILETDEDFIYVAIPSEFWMDIKQVLTDGTPIFLQSGTIEMELTHFKEELTYLIENIDGNANYGEQMEQAVKEIFLT</sequence>